<name>RS19_ECOLU</name>
<evidence type="ECO:0000255" key="1">
    <source>
        <dbReference type="HAMAP-Rule" id="MF_00531"/>
    </source>
</evidence>
<evidence type="ECO:0000305" key="2"/>
<feature type="chain" id="PRO_1000127973" description="Small ribosomal subunit protein uS19">
    <location>
        <begin position="1"/>
        <end position="92"/>
    </location>
</feature>
<keyword id="KW-0687">Ribonucleoprotein</keyword>
<keyword id="KW-0689">Ribosomal protein</keyword>
<keyword id="KW-0694">RNA-binding</keyword>
<keyword id="KW-0699">rRNA-binding</keyword>
<accession>B7NDT7</accession>
<dbReference type="EMBL" id="CU928163">
    <property type="protein sequence ID" value="CAR14937.1"/>
    <property type="molecule type" value="Genomic_DNA"/>
</dbReference>
<dbReference type="RefSeq" id="WP_001138117.1">
    <property type="nucleotide sequence ID" value="NC_011751.1"/>
</dbReference>
<dbReference type="RefSeq" id="YP_002414442.1">
    <property type="nucleotide sequence ID" value="NC_011751.1"/>
</dbReference>
<dbReference type="SMR" id="B7NDT7"/>
<dbReference type="STRING" id="585056.ECUMN_3789"/>
<dbReference type="GeneID" id="98390438"/>
<dbReference type="KEGG" id="eum:ECUMN_3789"/>
<dbReference type="PATRIC" id="fig|585056.7.peg.3964"/>
<dbReference type="HOGENOM" id="CLU_144911_0_1_6"/>
<dbReference type="Proteomes" id="UP000007097">
    <property type="component" value="Chromosome"/>
</dbReference>
<dbReference type="GO" id="GO:0005737">
    <property type="term" value="C:cytoplasm"/>
    <property type="evidence" value="ECO:0007669"/>
    <property type="project" value="UniProtKB-ARBA"/>
</dbReference>
<dbReference type="GO" id="GO:0015935">
    <property type="term" value="C:small ribosomal subunit"/>
    <property type="evidence" value="ECO:0007669"/>
    <property type="project" value="InterPro"/>
</dbReference>
<dbReference type="GO" id="GO:0019843">
    <property type="term" value="F:rRNA binding"/>
    <property type="evidence" value="ECO:0007669"/>
    <property type="project" value="UniProtKB-UniRule"/>
</dbReference>
<dbReference type="GO" id="GO:0003735">
    <property type="term" value="F:structural constituent of ribosome"/>
    <property type="evidence" value="ECO:0007669"/>
    <property type="project" value="InterPro"/>
</dbReference>
<dbReference type="GO" id="GO:0000028">
    <property type="term" value="P:ribosomal small subunit assembly"/>
    <property type="evidence" value="ECO:0007669"/>
    <property type="project" value="TreeGrafter"/>
</dbReference>
<dbReference type="GO" id="GO:0006412">
    <property type="term" value="P:translation"/>
    <property type="evidence" value="ECO:0007669"/>
    <property type="project" value="UniProtKB-UniRule"/>
</dbReference>
<dbReference type="FunFam" id="3.30.860.10:FF:000001">
    <property type="entry name" value="30S ribosomal protein S19"/>
    <property type="match status" value="1"/>
</dbReference>
<dbReference type="Gene3D" id="3.30.860.10">
    <property type="entry name" value="30s Ribosomal Protein S19, Chain A"/>
    <property type="match status" value="1"/>
</dbReference>
<dbReference type="HAMAP" id="MF_00531">
    <property type="entry name" value="Ribosomal_uS19"/>
    <property type="match status" value="1"/>
</dbReference>
<dbReference type="InterPro" id="IPR002222">
    <property type="entry name" value="Ribosomal_uS19"/>
</dbReference>
<dbReference type="InterPro" id="IPR005732">
    <property type="entry name" value="Ribosomal_uS19_bac-type"/>
</dbReference>
<dbReference type="InterPro" id="IPR020934">
    <property type="entry name" value="Ribosomal_uS19_CS"/>
</dbReference>
<dbReference type="InterPro" id="IPR023575">
    <property type="entry name" value="Ribosomal_uS19_SF"/>
</dbReference>
<dbReference type="NCBIfam" id="TIGR01050">
    <property type="entry name" value="rpsS_bact"/>
    <property type="match status" value="1"/>
</dbReference>
<dbReference type="PANTHER" id="PTHR11880">
    <property type="entry name" value="RIBOSOMAL PROTEIN S19P FAMILY MEMBER"/>
    <property type="match status" value="1"/>
</dbReference>
<dbReference type="PANTHER" id="PTHR11880:SF8">
    <property type="entry name" value="SMALL RIBOSOMAL SUBUNIT PROTEIN US19M"/>
    <property type="match status" value="1"/>
</dbReference>
<dbReference type="Pfam" id="PF00203">
    <property type="entry name" value="Ribosomal_S19"/>
    <property type="match status" value="1"/>
</dbReference>
<dbReference type="PIRSF" id="PIRSF002144">
    <property type="entry name" value="Ribosomal_S19"/>
    <property type="match status" value="1"/>
</dbReference>
<dbReference type="PRINTS" id="PR00975">
    <property type="entry name" value="RIBOSOMALS19"/>
</dbReference>
<dbReference type="SUPFAM" id="SSF54570">
    <property type="entry name" value="Ribosomal protein S19"/>
    <property type="match status" value="1"/>
</dbReference>
<dbReference type="PROSITE" id="PS00323">
    <property type="entry name" value="RIBOSOMAL_S19"/>
    <property type="match status" value="1"/>
</dbReference>
<gene>
    <name evidence="1" type="primary">rpsS</name>
    <name type="ordered locus">ECUMN_3789</name>
</gene>
<proteinExistence type="inferred from homology"/>
<organism>
    <name type="scientific">Escherichia coli O17:K52:H18 (strain UMN026 / ExPEC)</name>
    <dbReference type="NCBI Taxonomy" id="585056"/>
    <lineage>
        <taxon>Bacteria</taxon>
        <taxon>Pseudomonadati</taxon>
        <taxon>Pseudomonadota</taxon>
        <taxon>Gammaproteobacteria</taxon>
        <taxon>Enterobacterales</taxon>
        <taxon>Enterobacteriaceae</taxon>
        <taxon>Escherichia</taxon>
    </lineage>
</organism>
<protein>
    <recommendedName>
        <fullName evidence="1">Small ribosomal subunit protein uS19</fullName>
    </recommendedName>
    <alternativeName>
        <fullName evidence="2">30S ribosomal protein S19</fullName>
    </alternativeName>
</protein>
<sequence length="92" mass="10430">MPRSLKKGPFIDLHLLKKVEKAVESGDKKPLRTWSRRSTIFPNMIGLTIAVHNGRQHVPVFVTDEMVGHKLGEFAPTRTYRGHAADKKAKKK</sequence>
<comment type="function">
    <text evidence="1">Protein S19 forms a complex with S13 that binds strongly to the 16S ribosomal RNA.</text>
</comment>
<comment type="similarity">
    <text evidence="1">Belongs to the universal ribosomal protein uS19 family.</text>
</comment>
<reference key="1">
    <citation type="journal article" date="2009" name="PLoS Genet.">
        <title>Organised genome dynamics in the Escherichia coli species results in highly diverse adaptive paths.</title>
        <authorList>
            <person name="Touchon M."/>
            <person name="Hoede C."/>
            <person name="Tenaillon O."/>
            <person name="Barbe V."/>
            <person name="Baeriswyl S."/>
            <person name="Bidet P."/>
            <person name="Bingen E."/>
            <person name="Bonacorsi S."/>
            <person name="Bouchier C."/>
            <person name="Bouvet O."/>
            <person name="Calteau A."/>
            <person name="Chiapello H."/>
            <person name="Clermont O."/>
            <person name="Cruveiller S."/>
            <person name="Danchin A."/>
            <person name="Diard M."/>
            <person name="Dossat C."/>
            <person name="Karoui M.E."/>
            <person name="Frapy E."/>
            <person name="Garry L."/>
            <person name="Ghigo J.M."/>
            <person name="Gilles A.M."/>
            <person name="Johnson J."/>
            <person name="Le Bouguenec C."/>
            <person name="Lescat M."/>
            <person name="Mangenot S."/>
            <person name="Martinez-Jehanne V."/>
            <person name="Matic I."/>
            <person name="Nassif X."/>
            <person name="Oztas S."/>
            <person name="Petit M.A."/>
            <person name="Pichon C."/>
            <person name="Rouy Z."/>
            <person name="Ruf C.S."/>
            <person name="Schneider D."/>
            <person name="Tourret J."/>
            <person name="Vacherie B."/>
            <person name="Vallenet D."/>
            <person name="Medigue C."/>
            <person name="Rocha E.P.C."/>
            <person name="Denamur E."/>
        </authorList>
    </citation>
    <scope>NUCLEOTIDE SEQUENCE [LARGE SCALE GENOMIC DNA]</scope>
    <source>
        <strain>UMN026 / ExPEC</strain>
    </source>
</reference>